<evidence type="ECO:0000250" key="1">
    <source>
        <dbReference type="UniProtKB" id="Q88F88"/>
    </source>
</evidence>
<evidence type="ECO:0000250" key="2">
    <source>
        <dbReference type="UniProtKB" id="Q9I191"/>
    </source>
</evidence>
<evidence type="ECO:0000255" key="3"/>
<evidence type="ECO:0000255" key="4">
    <source>
        <dbReference type="PROSITE-ProRule" id="PRU00434"/>
    </source>
</evidence>
<evidence type="ECO:0000305" key="5"/>
<name>PVDT_PSEPF</name>
<sequence length="657" mass="69752">MQTPLIDLQDIRKSYGGGDTPEVHVLRGIDLSIHAGEFVAIVGASGSGKSTLMNILGCLDRPTSGEYRFAGENVAGLDTDELAWLRREAFGFVFQGYHLIPSGSAQENVEMPAIYAGIPAAERHARAAALLERLGLASRTGNRPHQLSGGQQQRVSIARALMNGGHIILADEPTGALDSHSGKEVMALLDELASQGHVVILITHDREVAARAKRIIEISDGLIIRDSAKEDPTVQASTNPGALQAVDLRKRLSEGSEASGAWKGELVDAVQAAWRVMWINRFRTALTLLGIIIGVASVVVMLAVGEGSKRQVMAQMGAFGSNIIYLSGAAPNPRTPPGIVTLDEVAALASLPQITRIMPVNGAEAGVRFGNLDHMSYIGGNDTNFPEIFNWPVVEGSYFTEADERNGAAVAVIGKKVRDKLLKDVSNPIGQYILIENVPFQVVGVLAGKGASSGDQDSDNRIAIPYSAASVRLFGTHNPEYVVIAAADARKVHETEMAIEQLMLQLHNGKKDFELTNNAAMIQAEARTQNTLSLMLGSIAAISLLVGGIGVMNIMLMTVRERTREIGIRMATGARQRDILRQFLTEAVMLSVVGGIAGIGLALLVGGVLILSEVAVAFSLVAIAGAFACALITGVVFGFMPARKAARLDPVTALTSE</sequence>
<gene>
    <name evidence="1" type="primary">pvdT</name>
    <name type="ordered locus">Pfl01_1856</name>
</gene>
<keyword id="KW-0067">ATP-binding</keyword>
<keyword id="KW-0997">Cell inner membrane</keyword>
<keyword id="KW-1003">Cell membrane</keyword>
<keyword id="KW-0472">Membrane</keyword>
<keyword id="KW-0547">Nucleotide-binding</keyword>
<keyword id="KW-1278">Translocase</keyword>
<keyword id="KW-0812">Transmembrane</keyword>
<keyword id="KW-1133">Transmembrane helix</keyword>
<keyword id="KW-0813">Transport</keyword>
<protein>
    <recommendedName>
        <fullName evidence="1">Pyoverdine export ATP-binding/permease protein PvdT</fullName>
        <ecNumber evidence="1">7.6.2.-</ecNumber>
    </recommendedName>
</protein>
<comment type="function">
    <text evidence="1 2">Part of the tripartite efflux system PvdRT-OpmQ required for the secretion into the extracellular milieu of the siderophore pyoverdine (PVD), which is involved in iron acquisition (By similarity). This subunit binds PVD and drives its secretion by hydrolyzing ATP (By similarity). The system is responsible for export of newly synthesized PVD after the final steps of biosynthesis have taken place in the periplasm (By similarity). It is also responsible for recycling of PVD after internalization of ferri-PVD into the periplasm by the outer-membrane receptor FpvA and release of iron from PVD, thus making PVD available for new cycles of iron uptake (By similarity).</text>
</comment>
<comment type="subunit">
    <text evidence="2">Part of the tripartite efflux system PvdRT-OpmQ, which is composed of an inner membrane component with both ATPase and permease domains, PvdT, a periplasmic membrane fusion protein, PvdR, and an outer membrane component, OpmQ.</text>
</comment>
<comment type="subcellular location">
    <subcellularLocation>
        <location evidence="1">Cell inner membrane</location>
        <topology evidence="3">Multi-pass membrane protein</topology>
    </subcellularLocation>
</comment>
<comment type="similarity">
    <text evidence="5">Belongs to the ABC transporter superfamily. Macrolide exporter (TC 3.A.1.122) family.</text>
</comment>
<dbReference type="EC" id="7.6.2.-" evidence="1"/>
<dbReference type="EMBL" id="CP000094">
    <property type="protein sequence ID" value="ABA73599.1"/>
    <property type="molecule type" value="Genomic_DNA"/>
</dbReference>
<dbReference type="RefSeq" id="WP_011333320.1">
    <property type="nucleotide sequence ID" value="NC_007492.2"/>
</dbReference>
<dbReference type="SMR" id="Q3KF57"/>
<dbReference type="KEGG" id="pfo:Pfl01_1856"/>
<dbReference type="eggNOG" id="COG0577">
    <property type="taxonomic scope" value="Bacteria"/>
</dbReference>
<dbReference type="eggNOG" id="COG1136">
    <property type="taxonomic scope" value="Bacteria"/>
</dbReference>
<dbReference type="HOGENOM" id="CLU_000604_78_2_6"/>
<dbReference type="Proteomes" id="UP000002704">
    <property type="component" value="Chromosome"/>
</dbReference>
<dbReference type="GO" id="GO:0005886">
    <property type="term" value="C:plasma membrane"/>
    <property type="evidence" value="ECO:0007669"/>
    <property type="project" value="UniProtKB-SubCell"/>
</dbReference>
<dbReference type="GO" id="GO:0005524">
    <property type="term" value="F:ATP binding"/>
    <property type="evidence" value="ECO:0007669"/>
    <property type="project" value="UniProtKB-KW"/>
</dbReference>
<dbReference type="GO" id="GO:0016887">
    <property type="term" value="F:ATP hydrolysis activity"/>
    <property type="evidence" value="ECO:0007669"/>
    <property type="project" value="InterPro"/>
</dbReference>
<dbReference type="GO" id="GO:0022857">
    <property type="term" value="F:transmembrane transporter activity"/>
    <property type="evidence" value="ECO:0007669"/>
    <property type="project" value="TreeGrafter"/>
</dbReference>
<dbReference type="CDD" id="cd03255">
    <property type="entry name" value="ABC_MJ0796_LolCDE_FtsE"/>
    <property type="match status" value="1"/>
</dbReference>
<dbReference type="FunFam" id="3.40.50.300:FF:000032">
    <property type="entry name" value="Export ABC transporter ATP-binding protein"/>
    <property type="match status" value="1"/>
</dbReference>
<dbReference type="Gene3D" id="3.40.50.300">
    <property type="entry name" value="P-loop containing nucleotide triphosphate hydrolases"/>
    <property type="match status" value="1"/>
</dbReference>
<dbReference type="InterPro" id="IPR003593">
    <property type="entry name" value="AAA+_ATPase"/>
</dbReference>
<dbReference type="InterPro" id="IPR003838">
    <property type="entry name" value="ABC3_permease_C"/>
</dbReference>
<dbReference type="InterPro" id="IPR003439">
    <property type="entry name" value="ABC_transporter-like_ATP-bd"/>
</dbReference>
<dbReference type="InterPro" id="IPR017871">
    <property type="entry name" value="ABC_transporter-like_CS"/>
</dbReference>
<dbReference type="InterPro" id="IPR017911">
    <property type="entry name" value="MacB-like_ATP-bd"/>
</dbReference>
<dbReference type="InterPro" id="IPR025857">
    <property type="entry name" value="MacB_PCD"/>
</dbReference>
<dbReference type="InterPro" id="IPR050250">
    <property type="entry name" value="Macrolide_Exporter_MacB"/>
</dbReference>
<dbReference type="InterPro" id="IPR027417">
    <property type="entry name" value="P-loop_NTPase"/>
</dbReference>
<dbReference type="PANTHER" id="PTHR30572:SF14">
    <property type="entry name" value="MACROLIDE EXPORT ATP-BINDING_PERMEASE PROTEIN MACB"/>
    <property type="match status" value="1"/>
</dbReference>
<dbReference type="PANTHER" id="PTHR30572">
    <property type="entry name" value="MEMBRANE COMPONENT OF TRANSPORTER-RELATED"/>
    <property type="match status" value="1"/>
</dbReference>
<dbReference type="Pfam" id="PF00005">
    <property type="entry name" value="ABC_tran"/>
    <property type="match status" value="1"/>
</dbReference>
<dbReference type="Pfam" id="PF02687">
    <property type="entry name" value="FtsX"/>
    <property type="match status" value="1"/>
</dbReference>
<dbReference type="Pfam" id="PF12704">
    <property type="entry name" value="MacB_PCD"/>
    <property type="match status" value="1"/>
</dbReference>
<dbReference type="SMART" id="SM00382">
    <property type="entry name" value="AAA"/>
    <property type="match status" value="1"/>
</dbReference>
<dbReference type="SUPFAM" id="SSF52540">
    <property type="entry name" value="P-loop containing nucleoside triphosphate hydrolases"/>
    <property type="match status" value="1"/>
</dbReference>
<dbReference type="PROSITE" id="PS00211">
    <property type="entry name" value="ABC_TRANSPORTER_1"/>
    <property type="match status" value="1"/>
</dbReference>
<dbReference type="PROSITE" id="PS50893">
    <property type="entry name" value="ABC_TRANSPORTER_2"/>
    <property type="match status" value="1"/>
</dbReference>
<dbReference type="PROSITE" id="PS51267">
    <property type="entry name" value="MACB"/>
    <property type="match status" value="1"/>
</dbReference>
<feature type="chain" id="PRO_0000269959" description="Pyoverdine export ATP-binding/permease protein PvdT">
    <location>
        <begin position="1"/>
        <end position="657"/>
    </location>
</feature>
<feature type="transmembrane region" description="Helical" evidence="3">
    <location>
        <begin position="285"/>
        <end position="305"/>
    </location>
</feature>
<feature type="transmembrane region" description="Helical" evidence="3">
    <location>
        <begin position="539"/>
        <end position="559"/>
    </location>
</feature>
<feature type="transmembrane region" description="Helical" evidence="3">
    <location>
        <begin position="590"/>
        <end position="610"/>
    </location>
</feature>
<feature type="transmembrane region" description="Helical" evidence="3">
    <location>
        <begin position="620"/>
        <end position="640"/>
    </location>
</feature>
<feature type="domain" description="ABC transporter" evidence="4">
    <location>
        <begin position="6"/>
        <end position="245"/>
    </location>
</feature>
<feature type="binding site" evidence="4">
    <location>
        <begin position="43"/>
        <end position="50"/>
    </location>
    <ligand>
        <name>ATP</name>
        <dbReference type="ChEBI" id="CHEBI:30616"/>
    </ligand>
</feature>
<accession>Q3KF57</accession>
<proteinExistence type="inferred from homology"/>
<organism>
    <name type="scientific">Pseudomonas fluorescens (strain Pf0-1)</name>
    <dbReference type="NCBI Taxonomy" id="205922"/>
    <lineage>
        <taxon>Bacteria</taxon>
        <taxon>Pseudomonadati</taxon>
        <taxon>Pseudomonadota</taxon>
        <taxon>Gammaproteobacteria</taxon>
        <taxon>Pseudomonadales</taxon>
        <taxon>Pseudomonadaceae</taxon>
        <taxon>Pseudomonas</taxon>
    </lineage>
</organism>
<reference key="1">
    <citation type="journal article" date="2009" name="Genome Biol.">
        <title>Genomic and genetic analyses of diversity and plant interactions of Pseudomonas fluorescens.</title>
        <authorList>
            <person name="Silby M.W."/>
            <person name="Cerdeno-Tarraga A.M."/>
            <person name="Vernikos G.S."/>
            <person name="Giddens S.R."/>
            <person name="Jackson R.W."/>
            <person name="Preston G.M."/>
            <person name="Zhang X.-X."/>
            <person name="Moon C.D."/>
            <person name="Gehrig S.M."/>
            <person name="Godfrey S.A.C."/>
            <person name="Knight C.G."/>
            <person name="Malone J.G."/>
            <person name="Robinson Z."/>
            <person name="Spiers A.J."/>
            <person name="Harris S."/>
            <person name="Challis G.L."/>
            <person name="Yaxley A.M."/>
            <person name="Harris D."/>
            <person name="Seeger K."/>
            <person name="Murphy L."/>
            <person name="Rutter S."/>
            <person name="Squares R."/>
            <person name="Quail M.A."/>
            <person name="Saunders E."/>
            <person name="Mavromatis K."/>
            <person name="Brettin T.S."/>
            <person name="Bentley S.D."/>
            <person name="Hothersall J."/>
            <person name="Stephens E."/>
            <person name="Thomas C.M."/>
            <person name="Parkhill J."/>
            <person name="Levy S.B."/>
            <person name="Rainey P.B."/>
            <person name="Thomson N.R."/>
        </authorList>
    </citation>
    <scope>NUCLEOTIDE SEQUENCE [LARGE SCALE GENOMIC DNA]</scope>
    <source>
        <strain>Pf0-1</strain>
    </source>
</reference>